<dbReference type="EC" id="2.1.1.177" evidence="1"/>
<dbReference type="EMBL" id="CP000029">
    <property type="protein sequence ID" value="AAW53337.1"/>
    <property type="molecule type" value="Genomic_DNA"/>
</dbReference>
<dbReference type="RefSeq" id="WP_002458513.1">
    <property type="nucleotide sequence ID" value="NC_002976.3"/>
</dbReference>
<dbReference type="SMR" id="Q5HK23"/>
<dbReference type="STRING" id="176279.SERP2529"/>
<dbReference type="GeneID" id="50017439"/>
<dbReference type="KEGG" id="ser:SERP2529"/>
<dbReference type="eggNOG" id="COG1576">
    <property type="taxonomic scope" value="Bacteria"/>
</dbReference>
<dbReference type="HOGENOM" id="CLU_100552_0_0_9"/>
<dbReference type="Proteomes" id="UP000000531">
    <property type="component" value="Chromosome"/>
</dbReference>
<dbReference type="GO" id="GO:0005737">
    <property type="term" value="C:cytoplasm"/>
    <property type="evidence" value="ECO:0007669"/>
    <property type="project" value="UniProtKB-SubCell"/>
</dbReference>
<dbReference type="GO" id="GO:0070038">
    <property type="term" value="F:rRNA (pseudouridine-N3-)-methyltransferase activity"/>
    <property type="evidence" value="ECO:0007669"/>
    <property type="project" value="UniProtKB-UniRule"/>
</dbReference>
<dbReference type="CDD" id="cd18081">
    <property type="entry name" value="RlmH-like"/>
    <property type="match status" value="1"/>
</dbReference>
<dbReference type="Gene3D" id="3.40.1280.10">
    <property type="match status" value="1"/>
</dbReference>
<dbReference type="HAMAP" id="MF_00658">
    <property type="entry name" value="23SrRNA_methyltr_H"/>
    <property type="match status" value="1"/>
</dbReference>
<dbReference type="InterPro" id="IPR029028">
    <property type="entry name" value="Alpha/beta_knot_MTases"/>
</dbReference>
<dbReference type="InterPro" id="IPR003742">
    <property type="entry name" value="RlmH-like"/>
</dbReference>
<dbReference type="InterPro" id="IPR029026">
    <property type="entry name" value="tRNA_m1G_MTases_N"/>
</dbReference>
<dbReference type="NCBIfam" id="NF000985">
    <property type="entry name" value="PRK00103.1-3"/>
    <property type="match status" value="1"/>
</dbReference>
<dbReference type="NCBIfam" id="NF000986">
    <property type="entry name" value="PRK00103.1-4"/>
    <property type="match status" value="1"/>
</dbReference>
<dbReference type="NCBIfam" id="TIGR00246">
    <property type="entry name" value="tRNA_RlmH_YbeA"/>
    <property type="match status" value="1"/>
</dbReference>
<dbReference type="PANTHER" id="PTHR33603">
    <property type="entry name" value="METHYLTRANSFERASE"/>
    <property type="match status" value="1"/>
</dbReference>
<dbReference type="PANTHER" id="PTHR33603:SF1">
    <property type="entry name" value="RIBOSOMAL RNA LARGE SUBUNIT METHYLTRANSFERASE H"/>
    <property type="match status" value="1"/>
</dbReference>
<dbReference type="Pfam" id="PF02590">
    <property type="entry name" value="SPOUT_MTase"/>
    <property type="match status" value="1"/>
</dbReference>
<dbReference type="PIRSF" id="PIRSF004505">
    <property type="entry name" value="MT_bac"/>
    <property type="match status" value="1"/>
</dbReference>
<dbReference type="SUPFAM" id="SSF75217">
    <property type="entry name" value="alpha/beta knot"/>
    <property type="match status" value="1"/>
</dbReference>
<sequence length="159" mass="18382">MKITILSVGKLKEKYWKQAIAEYEKRLGPYTKIELIEVPDEKAPENMSDKEIEQVKEKEGQRLLNKIKPQSTVITLEIKGKMLSSEGLAKELQTRMTQGQSDFTFVIGGSNGLHQDVLQRSNYALSFSNMTFPHQMMRVILIEQIYRAFKIMRGEAYHK</sequence>
<organism>
    <name type="scientific">Staphylococcus epidermidis (strain ATCC 35984 / DSM 28319 / BCRC 17069 / CCUG 31568 / BM 3577 / RP62A)</name>
    <dbReference type="NCBI Taxonomy" id="176279"/>
    <lineage>
        <taxon>Bacteria</taxon>
        <taxon>Bacillati</taxon>
        <taxon>Bacillota</taxon>
        <taxon>Bacilli</taxon>
        <taxon>Bacillales</taxon>
        <taxon>Staphylococcaceae</taxon>
        <taxon>Staphylococcus</taxon>
    </lineage>
</organism>
<protein>
    <recommendedName>
        <fullName evidence="1">Ribosomal RNA large subunit methyltransferase H</fullName>
        <ecNumber evidence="1">2.1.1.177</ecNumber>
    </recommendedName>
    <alternativeName>
        <fullName evidence="1">23S rRNA (pseudouridine1915-N3)-methyltransferase</fullName>
    </alternativeName>
    <alternativeName>
        <fullName evidence="1">23S rRNA m3Psi1915 methyltransferase</fullName>
    </alternativeName>
    <alternativeName>
        <fullName evidence="1">rRNA (pseudouridine-N3-)-methyltransferase RlmH</fullName>
    </alternativeName>
</protein>
<proteinExistence type="inferred from homology"/>
<accession>Q5HK23</accession>
<evidence type="ECO:0000255" key="1">
    <source>
        <dbReference type="HAMAP-Rule" id="MF_00658"/>
    </source>
</evidence>
<gene>
    <name evidence="1" type="primary">rlmH</name>
    <name type="ordered locus">SERP2529</name>
</gene>
<comment type="function">
    <text evidence="1">Specifically methylates the pseudouridine at position 1915 (m3Psi1915) in 23S rRNA.</text>
</comment>
<comment type="catalytic activity">
    <reaction evidence="1">
        <text>pseudouridine(1915) in 23S rRNA + S-adenosyl-L-methionine = N(3)-methylpseudouridine(1915) in 23S rRNA + S-adenosyl-L-homocysteine + H(+)</text>
        <dbReference type="Rhea" id="RHEA:42752"/>
        <dbReference type="Rhea" id="RHEA-COMP:10221"/>
        <dbReference type="Rhea" id="RHEA-COMP:10222"/>
        <dbReference type="ChEBI" id="CHEBI:15378"/>
        <dbReference type="ChEBI" id="CHEBI:57856"/>
        <dbReference type="ChEBI" id="CHEBI:59789"/>
        <dbReference type="ChEBI" id="CHEBI:65314"/>
        <dbReference type="ChEBI" id="CHEBI:74486"/>
        <dbReference type="EC" id="2.1.1.177"/>
    </reaction>
</comment>
<comment type="subunit">
    <text evidence="1">Homodimer.</text>
</comment>
<comment type="subcellular location">
    <subcellularLocation>
        <location evidence="1">Cytoplasm</location>
    </subcellularLocation>
</comment>
<comment type="similarity">
    <text evidence="1">Belongs to the RNA methyltransferase RlmH family.</text>
</comment>
<reference key="1">
    <citation type="journal article" date="2005" name="J. Bacteriol.">
        <title>Insights on evolution of virulence and resistance from the complete genome analysis of an early methicillin-resistant Staphylococcus aureus strain and a biofilm-producing methicillin-resistant Staphylococcus epidermidis strain.</title>
        <authorList>
            <person name="Gill S.R."/>
            <person name="Fouts D.E."/>
            <person name="Archer G.L."/>
            <person name="Mongodin E.F."/>
            <person name="DeBoy R.T."/>
            <person name="Ravel J."/>
            <person name="Paulsen I.T."/>
            <person name="Kolonay J.F."/>
            <person name="Brinkac L.M."/>
            <person name="Beanan M.J."/>
            <person name="Dodson R.J."/>
            <person name="Daugherty S.C."/>
            <person name="Madupu R."/>
            <person name="Angiuoli S.V."/>
            <person name="Durkin A.S."/>
            <person name="Haft D.H."/>
            <person name="Vamathevan J.J."/>
            <person name="Khouri H."/>
            <person name="Utterback T.R."/>
            <person name="Lee C."/>
            <person name="Dimitrov G."/>
            <person name="Jiang L."/>
            <person name="Qin H."/>
            <person name="Weidman J."/>
            <person name="Tran K."/>
            <person name="Kang K.H."/>
            <person name="Hance I.R."/>
            <person name="Nelson K.E."/>
            <person name="Fraser C.M."/>
        </authorList>
    </citation>
    <scope>NUCLEOTIDE SEQUENCE [LARGE SCALE GENOMIC DNA]</scope>
    <source>
        <strain>ATCC 35984 / DSM 28319 / BCRC 17069 / CCUG 31568 / BM 3577 / RP62A</strain>
    </source>
</reference>
<name>RLMH_STAEQ</name>
<keyword id="KW-0963">Cytoplasm</keyword>
<keyword id="KW-0489">Methyltransferase</keyword>
<keyword id="KW-1185">Reference proteome</keyword>
<keyword id="KW-0698">rRNA processing</keyword>
<keyword id="KW-0949">S-adenosyl-L-methionine</keyword>
<keyword id="KW-0808">Transferase</keyword>
<feature type="chain" id="PRO_0000198184" description="Ribosomal RNA large subunit methyltransferase H">
    <location>
        <begin position="1"/>
        <end position="159"/>
    </location>
</feature>
<feature type="binding site" evidence="1">
    <location>
        <position position="76"/>
    </location>
    <ligand>
        <name>S-adenosyl-L-methionine</name>
        <dbReference type="ChEBI" id="CHEBI:59789"/>
    </ligand>
</feature>
<feature type="binding site" evidence="1">
    <location>
        <position position="108"/>
    </location>
    <ligand>
        <name>S-adenosyl-L-methionine</name>
        <dbReference type="ChEBI" id="CHEBI:59789"/>
    </ligand>
</feature>
<feature type="binding site" evidence="1">
    <location>
        <begin position="127"/>
        <end position="132"/>
    </location>
    <ligand>
        <name>S-adenosyl-L-methionine</name>
        <dbReference type="ChEBI" id="CHEBI:59789"/>
    </ligand>
</feature>